<sequence>MQRFVCSGVFRQTSVLLQISPVSHCHTRRMQDSPSHRSLKQLISSQRWLNSTTALCSPTSQKTSASGQEEPDPLHDKSSGLIQRFKKTFKQYGKVMIPVHLLTSTMWFGTFYYAAMKGVNLVPFLEYVGFPDKVVKLLENSQSGYALTAYAMYKIATPARYTVTLGGTSLSVKYLRKHGYMSTPPPVKEYLQEKMEETKERISGKMEETKDRFSERMEETKDKFNEKLQETKDKVSFRKKKE</sequence>
<organism>
    <name type="scientific">Danio rerio</name>
    <name type="common">Zebrafish</name>
    <name type="synonym">Brachydanio rerio</name>
    <dbReference type="NCBI Taxonomy" id="7955"/>
    <lineage>
        <taxon>Eukaryota</taxon>
        <taxon>Metazoa</taxon>
        <taxon>Chordata</taxon>
        <taxon>Craniata</taxon>
        <taxon>Vertebrata</taxon>
        <taxon>Euteleostomi</taxon>
        <taxon>Actinopterygii</taxon>
        <taxon>Neopterygii</taxon>
        <taxon>Teleostei</taxon>
        <taxon>Ostariophysi</taxon>
        <taxon>Cypriniformes</taxon>
        <taxon>Danionidae</taxon>
        <taxon>Danioninae</taxon>
        <taxon>Danio</taxon>
    </lineage>
</organism>
<dbReference type="EMBL" id="AL928820">
    <property type="protein sequence ID" value="CAK03686.1"/>
    <property type="molecule type" value="Genomic_DNA"/>
</dbReference>
<dbReference type="EMBL" id="BC133959">
    <property type="protein sequence ID" value="AAI33960.1"/>
    <property type="molecule type" value="mRNA"/>
</dbReference>
<dbReference type="RefSeq" id="NP_001038459.1">
    <property type="nucleotide sequence ID" value="NM_001044994.2"/>
</dbReference>
<dbReference type="SMR" id="Q1MTD4"/>
<dbReference type="FunCoup" id="Q1MTD4">
    <property type="interactions" value="597"/>
</dbReference>
<dbReference type="STRING" id="7955.ENSDARP00000094467"/>
<dbReference type="PaxDb" id="7955-ENSDARP00000106065"/>
<dbReference type="Ensembl" id="ENSDART00000103692">
    <property type="protein sequence ID" value="ENSDARP00000094467"/>
    <property type="gene ID" value="ENSDARG00000035985"/>
</dbReference>
<dbReference type="Ensembl" id="ENSDART00000151184">
    <property type="protein sequence ID" value="ENSDARP00000125742"/>
    <property type="gene ID" value="ENSDARG00000035985"/>
</dbReference>
<dbReference type="GeneID" id="562734"/>
<dbReference type="KEGG" id="dre:562734"/>
<dbReference type="AGR" id="ZFIN:ZDB-GENE-030131-5627"/>
<dbReference type="CTD" id="562734"/>
<dbReference type="ZFIN" id="ZDB-GENE-030131-5627">
    <property type="gene designation" value="fam210aa"/>
</dbReference>
<dbReference type="eggNOG" id="KOG4082">
    <property type="taxonomic scope" value="Eukaryota"/>
</dbReference>
<dbReference type="HOGENOM" id="CLU_085747_0_0_1"/>
<dbReference type="InParanoid" id="Q1MTD4"/>
<dbReference type="OMA" id="HTWAVRE"/>
<dbReference type="OrthoDB" id="5874039at2759"/>
<dbReference type="PhylomeDB" id="Q1MTD4"/>
<dbReference type="TreeFam" id="TF313283"/>
<dbReference type="PRO" id="PR:Q1MTD4"/>
<dbReference type="Proteomes" id="UP000000437">
    <property type="component" value="Chromosome 19"/>
</dbReference>
<dbReference type="Bgee" id="ENSDARG00000035985">
    <property type="expression patterns" value="Expressed in muscle tissue and 28 other cell types or tissues"/>
</dbReference>
<dbReference type="GO" id="GO:0016020">
    <property type="term" value="C:membrane"/>
    <property type="evidence" value="ECO:0007669"/>
    <property type="project" value="UniProtKB-SubCell"/>
</dbReference>
<dbReference type="GO" id="GO:0005739">
    <property type="term" value="C:mitochondrion"/>
    <property type="evidence" value="ECO:0000318"/>
    <property type="project" value="GO_Central"/>
</dbReference>
<dbReference type="Gene3D" id="6.10.140.1430">
    <property type="match status" value="1"/>
</dbReference>
<dbReference type="InterPro" id="IPR045866">
    <property type="entry name" value="FAM210A/B-like"/>
</dbReference>
<dbReference type="InterPro" id="IPR009688">
    <property type="entry name" value="FAM210A/B-like_dom"/>
</dbReference>
<dbReference type="PANTHER" id="PTHR21377:SF1">
    <property type="entry name" value="PROTEIN FAM210A"/>
    <property type="match status" value="1"/>
</dbReference>
<dbReference type="PANTHER" id="PTHR21377">
    <property type="entry name" value="PROTEIN FAM210B, MITOCHONDRIAL"/>
    <property type="match status" value="1"/>
</dbReference>
<dbReference type="Pfam" id="PF06916">
    <property type="entry name" value="FAM210A-B_dom"/>
    <property type="match status" value="1"/>
</dbReference>
<dbReference type="SUPFAM" id="SSF58113">
    <property type="entry name" value="Apolipoprotein A-I"/>
    <property type="match status" value="1"/>
</dbReference>
<gene>
    <name type="ORF">si:ch211-105d11.2</name>
</gene>
<name>CR19A_DANRE</name>
<reference key="1">
    <citation type="journal article" date="2013" name="Nature">
        <title>The zebrafish reference genome sequence and its relationship to the human genome.</title>
        <authorList>
            <person name="Howe K."/>
            <person name="Clark M.D."/>
            <person name="Torroja C.F."/>
            <person name="Torrance J."/>
            <person name="Berthelot C."/>
            <person name="Muffato M."/>
            <person name="Collins J.E."/>
            <person name="Humphray S."/>
            <person name="McLaren K."/>
            <person name="Matthews L."/>
            <person name="McLaren S."/>
            <person name="Sealy I."/>
            <person name="Caccamo M."/>
            <person name="Churcher C."/>
            <person name="Scott C."/>
            <person name="Barrett J.C."/>
            <person name="Koch R."/>
            <person name="Rauch G.J."/>
            <person name="White S."/>
            <person name="Chow W."/>
            <person name="Kilian B."/>
            <person name="Quintais L.T."/>
            <person name="Guerra-Assuncao J.A."/>
            <person name="Zhou Y."/>
            <person name="Gu Y."/>
            <person name="Yen J."/>
            <person name="Vogel J.H."/>
            <person name="Eyre T."/>
            <person name="Redmond S."/>
            <person name="Banerjee R."/>
            <person name="Chi J."/>
            <person name="Fu B."/>
            <person name="Langley E."/>
            <person name="Maguire S.F."/>
            <person name="Laird G.K."/>
            <person name="Lloyd D."/>
            <person name="Kenyon E."/>
            <person name="Donaldson S."/>
            <person name="Sehra H."/>
            <person name="Almeida-King J."/>
            <person name="Loveland J."/>
            <person name="Trevanion S."/>
            <person name="Jones M."/>
            <person name="Quail M."/>
            <person name="Willey D."/>
            <person name="Hunt A."/>
            <person name="Burton J."/>
            <person name="Sims S."/>
            <person name="McLay K."/>
            <person name="Plumb B."/>
            <person name="Davis J."/>
            <person name="Clee C."/>
            <person name="Oliver K."/>
            <person name="Clark R."/>
            <person name="Riddle C."/>
            <person name="Elliot D."/>
            <person name="Threadgold G."/>
            <person name="Harden G."/>
            <person name="Ware D."/>
            <person name="Begum S."/>
            <person name="Mortimore B."/>
            <person name="Kerry G."/>
            <person name="Heath P."/>
            <person name="Phillimore B."/>
            <person name="Tracey A."/>
            <person name="Corby N."/>
            <person name="Dunn M."/>
            <person name="Johnson C."/>
            <person name="Wood J."/>
            <person name="Clark S."/>
            <person name="Pelan S."/>
            <person name="Griffiths G."/>
            <person name="Smith M."/>
            <person name="Glithero R."/>
            <person name="Howden P."/>
            <person name="Barker N."/>
            <person name="Lloyd C."/>
            <person name="Stevens C."/>
            <person name="Harley J."/>
            <person name="Holt K."/>
            <person name="Panagiotidis G."/>
            <person name="Lovell J."/>
            <person name="Beasley H."/>
            <person name="Henderson C."/>
            <person name="Gordon D."/>
            <person name="Auger K."/>
            <person name="Wright D."/>
            <person name="Collins J."/>
            <person name="Raisen C."/>
            <person name="Dyer L."/>
            <person name="Leung K."/>
            <person name="Robertson L."/>
            <person name="Ambridge K."/>
            <person name="Leongamornlert D."/>
            <person name="McGuire S."/>
            <person name="Gilderthorp R."/>
            <person name="Griffiths C."/>
            <person name="Manthravadi D."/>
            <person name="Nichol S."/>
            <person name="Barker G."/>
            <person name="Whitehead S."/>
            <person name="Kay M."/>
            <person name="Brown J."/>
            <person name="Murnane C."/>
            <person name="Gray E."/>
            <person name="Humphries M."/>
            <person name="Sycamore N."/>
            <person name="Barker D."/>
            <person name="Saunders D."/>
            <person name="Wallis J."/>
            <person name="Babbage A."/>
            <person name="Hammond S."/>
            <person name="Mashreghi-Mohammadi M."/>
            <person name="Barr L."/>
            <person name="Martin S."/>
            <person name="Wray P."/>
            <person name="Ellington A."/>
            <person name="Matthews N."/>
            <person name="Ellwood M."/>
            <person name="Woodmansey R."/>
            <person name="Clark G."/>
            <person name="Cooper J."/>
            <person name="Tromans A."/>
            <person name="Grafham D."/>
            <person name="Skuce C."/>
            <person name="Pandian R."/>
            <person name="Andrews R."/>
            <person name="Harrison E."/>
            <person name="Kimberley A."/>
            <person name="Garnett J."/>
            <person name="Fosker N."/>
            <person name="Hall R."/>
            <person name="Garner P."/>
            <person name="Kelly D."/>
            <person name="Bird C."/>
            <person name="Palmer S."/>
            <person name="Gehring I."/>
            <person name="Berger A."/>
            <person name="Dooley C.M."/>
            <person name="Ersan-Urun Z."/>
            <person name="Eser C."/>
            <person name="Geiger H."/>
            <person name="Geisler M."/>
            <person name="Karotki L."/>
            <person name="Kirn A."/>
            <person name="Konantz J."/>
            <person name="Konantz M."/>
            <person name="Oberlander M."/>
            <person name="Rudolph-Geiger S."/>
            <person name="Teucke M."/>
            <person name="Lanz C."/>
            <person name="Raddatz G."/>
            <person name="Osoegawa K."/>
            <person name="Zhu B."/>
            <person name="Rapp A."/>
            <person name="Widaa S."/>
            <person name="Langford C."/>
            <person name="Yang F."/>
            <person name="Schuster S.C."/>
            <person name="Carter N.P."/>
            <person name="Harrow J."/>
            <person name="Ning Z."/>
            <person name="Herrero J."/>
            <person name="Searle S.M."/>
            <person name="Enright A."/>
            <person name="Geisler R."/>
            <person name="Plasterk R.H."/>
            <person name="Lee C."/>
            <person name="Westerfield M."/>
            <person name="de Jong P.J."/>
            <person name="Zon L.I."/>
            <person name="Postlethwait J.H."/>
            <person name="Nusslein-Volhard C."/>
            <person name="Hubbard T.J."/>
            <person name="Roest Crollius H."/>
            <person name="Rogers J."/>
            <person name="Stemple D.L."/>
        </authorList>
    </citation>
    <scope>NUCLEOTIDE SEQUENCE [LARGE SCALE GENOMIC DNA]</scope>
    <source>
        <strain>Tuebingen</strain>
    </source>
</reference>
<reference key="2">
    <citation type="submission" date="2007-03" db="EMBL/GenBank/DDBJ databases">
        <authorList>
            <consortium name="NIH - Zebrafish Gene Collection (ZGC) project"/>
        </authorList>
    </citation>
    <scope>NUCLEOTIDE SEQUENCE [LARGE SCALE MRNA]</scope>
    <source>
        <tissue>Embryo</tissue>
    </source>
</reference>
<accession>Q1MTD4</accession>
<accession>A3KNQ7</accession>
<comment type="subcellular location">
    <subcellularLocation>
        <location evidence="3">Membrane</location>
        <topology evidence="3">Single-pass membrane protein</topology>
    </subcellularLocation>
</comment>
<feature type="chain" id="PRO_0000274429" description="Uncharacterized protein C18orf19 homolog A">
    <location>
        <begin position="1"/>
        <end position="242"/>
    </location>
</feature>
<feature type="transmembrane region" description="Helical" evidence="1">
    <location>
        <begin position="92"/>
        <end position="114"/>
    </location>
</feature>
<feature type="domain" description="DUF1279">
    <location>
        <begin position="76"/>
        <end position="188"/>
    </location>
</feature>
<feature type="region of interest" description="Disordered" evidence="2">
    <location>
        <begin position="57"/>
        <end position="78"/>
    </location>
</feature>
<feature type="region of interest" description="Disordered" evidence="2">
    <location>
        <begin position="198"/>
        <end position="242"/>
    </location>
</feature>
<feature type="coiled-coil region" evidence="1">
    <location>
        <begin position="188"/>
        <end position="237"/>
    </location>
</feature>
<feature type="compositionally biased region" description="Polar residues" evidence="2">
    <location>
        <begin position="57"/>
        <end position="67"/>
    </location>
</feature>
<feature type="compositionally biased region" description="Basic and acidic residues" evidence="2">
    <location>
        <begin position="198"/>
        <end position="236"/>
    </location>
</feature>
<protein>
    <recommendedName>
        <fullName>Uncharacterized protein C18orf19 homolog A</fullName>
    </recommendedName>
</protein>
<evidence type="ECO:0000255" key="1"/>
<evidence type="ECO:0000256" key="2">
    <source>
        <dbReference type="SAM" id="MobiDB-lite"/>
    </source>
</evidence>
<evidence type="ECO:0000305" key="3"/>
<keyword id="KW-0175">Coiled coil</keyword>
<keyword id="KW-0472">Membrane</keyword>
<keyword id="KW-1185">Reference proteome</keyword>
<keyword id="KW-0812">Transmembrane</keyword>
<keyword id="KW-1133">Transmembrane helix</keyword>
<proteinExistence type="evidence at transcript level"/>